<dbReference type="EC" id="5.3.1.15" evidence="2"/>
<dbReference type="EC" id="5.3.1.7" evidence="2"/>
<dbReference type="EMBL" id="CP002131">
    <property type="protein sequence ID" value="ADL08607.1"/>
    <property type="molecule type" value="Genomic_DNA"/>
</dbReference>
<dbReference type="RefSeq" id="WP_013276628.1">
    <property type="nucleotide sequence ID" value="NC_014377.1"/>
</dbReference>
<dbReference type="SMR" id="D9RZ53"/>
<dbReference type="STRING" id="555079.Toce_1877"/>
<dbReference type="KEGG" id="toc:Toce_1877"/>
<dbReference type="eggNOG" id="COG3822">
    <property type="taxonomic scope" value="Bacteria"/>
</dbReference>
<dbReference type="HOGENOM" id="CLU_1553334_0_0_9"/>
<dbReference type="OrthoDB" id="9781654at2"/>
<dbReference type="BRENDA" id="5.3.1.15">
    <property type="organism ID" value="16127"/>
</dbReference>
<dbReference type="BRENDA" id="5.3.1.7">
    <property type="organism ID" value="16127"/>
</dbReference>
<dbReference type="Proteomes" id="UP000000272">
    <property type="component" value="Chromosome"/>
</dbReference>
<dbReference type="GO" id="GO:0047828">
    <property type="term" value="F:D-lyxose ketol-isomerase activity"/>
    <property type="evidence" value="ECO:0007669"/>
    <property type="project" value="UniProtKB-EC"/>
</dbReference>
<dbReference type="GO" id="GO:0050089">
    <property type="term" value="F:mannose isomerase activity"/>
    <property type="evidence" value="ECO:0007669"/>
    <property type="project" value="RHEA"/>
</dbReference>
<dbReference type="GO" id="GO:0046872">
    <property type="term" value="F:metal ion binding"/>
    <property type="evidence" value="ECO:0007669"/>
    <property type="project" value="UniProtKB-KW"/>
</dbReference>
<dbReference type="CDD" id="cd20308">
    <property type="entry name" value="cupin_YdaE"/>
    <property type="match status" value="1"/>
</dbReference>
<dbReference type="Gene3D" id="2.60.120.10">
    <property type="entry name" value="Jelly Rolls"/>
    <property type="match status" value="1"/>
</dbReference>
<dbReference type="InterPro" id="IPR010864">
    <property type="entry name" value="D-lyxose_isomer"/>
</dbReference>
<dbReference type="InterPro" id="IPR014710">
    <property type="entry name" value="RmlC-like_jellyroll"/>
</dbReference>
<dbReference type="InterPro" id="IPR011051">
    <property type="entry name" value="RmlC_Cupin_sf"/>
</dbReference>
<dbReference type="Pfam" id="PF07385">
    <property type="entry name" value="Lyx_isomer"/>
    <property type="match status" value="1"/>
</dbReference>
<dbReference type="SUPFAM" id="SSF51182">
    <property type="entry name" value="RmlC-like cupins"/>
    <property type="match status" value="1"/>
</dbReference>
<organism>
    <name type="scientific">Thermosediminibacter oceani (strain ATCC BAA-1034 / DSM 16646 / JW/IW-1228P)</name>
    <dbReference type="NCBI Taxonomy" id="555079"/>
    <lineage>
        <taxon>Bacteria</taxon>
        <taxon>Bacillati</taxon>
        <taxon>Bacillota</taxon>
        <taxon>Clostridia</taxon>
        <taxon>Thermosediminibacterales</taxon>
        <taxon>Thermosediminibacteraceae</taxon>
        <taxon>Thermosediminibacter</taxon>
    </lineage>
</organism>
<accession>D9RZ53</accession>
<reference key="1">
    <citation type="journal article" date="2010" name="Stand. Genomic Sci.">
        <title>Complete genome sequence of Thermosediminibacter oceani type strain (JW/IW-1228P).</title>
        <authorList>
            <person name="Pitluck S."/>
            <person name="Yasawong M."/>
            <person name="Munk C."/>
            <person name="Nolan M."/>
            <person name="Lapidus A."/>
            <person name="Lucas S."/>
            <person name="Glavina Del Rio T."/>
            <person name="Tice H."/>
            <person name="Cheng J.F."/>
            <person name="Bruce D."/>
            <person name="Detter C."/>
            <person name="Tapia R."/>
            <person name="Han C."/>
            <person name="Goodwin L."/>
            <person name="Liolios K."/>
            <person name="Ivanova N."/>
            <person name="Mavromatis K."/>
            <person name="Mikhailova N."/>
            <person name="Pati A."/>
            <person name="Chen A."/>
            <person name="Palaniappan K."/>
            <person name="Land M."/>
            <person name="Hauser L."/>
            <person name="Chang Y.J."/>
            <person name="Jeffries C.D."/>
            <person name="Rohde M."/>
            <person name="Spring S."/>
            <person name="Sikorski J."/>
            <person name="Goker M."/>
            <person name="Woyke T."/>
            <person name="Bristow J."/>
            <person name="Eisen J.A."/>
            <person name="Markowitz V."/>
            <person name="Hugenholtz P."/>
            <person name="Kyrpides N.C."/>
            <person name="Klenk H.P."/>
        </authorList>
    </citation>
    <scope>NUCLEOTIDE SEQUENCE [LARGE SCALE GENOMIC DNA]</scope>
    <source>
        <strain>ATCC BAA-1034 / DSM 16646 / JW/IW-1228P</strain>
    </source>
</reference>
<reference key="2">
    <citation type="journal article" date="2016" name="Process Biochem.">
        <title>Efficient biotransformation of D-fructose to D-mannose by a thermostable D-lyxose isomerase from Thermosediminibacter oceani.</title>
        <authorList>
            <person name="Yu L."/>
            <person name="Zhang W."/>
            <person name="Zhang T."/>
            <person name="Jiang B."/>
            <person name="Mu W."/>
        </authorList>
    </citation>
    <scope>FUNCTION</scope>
    <scope>CATALYTIC ACTIVITY</scope>
    <scope>COFACTOR</scope>
    <scope>BIOPHYSICOCHEMICAL PROPERTIES</scope>
    <scope>SUBUNIT</scope>
    <source>
        <strain>ATCC BAA-1034 / DSM 16646 / JW/IW-1228P</strain>
    </source>
</reference>
<keyword id="KW-0119">Carbohydrate metabolism</keyword>
<keyword id="KW-0413">Isomerase</keyword>
<keyword id="KW-0464">Manganese</keyword>
<keyword id="KW-0479">Metal-binding</keyword>
<keyword id="KW-1185">Reference proteome</keyword>
<protein>
    <recommendedName>
        <fullName evidence="3">D-lyxose/D-mannose isomerase</fullName>
        <ecNumber evidence="2">5.3.1.15</ecNumber>
        <ecNumber evidence="2">5.3.1.7</ecNumber>
    </recommendedName>
</protein>
<evidence type="ECO:0000250" key="1">
    <source>
        <dbReference type="UniProtKB" id="A0A256XLS3"/>
    </source>
</evidence>
<evidence type="ECO:0000269" key="2">
    <source ref="2"/>
</evidence>
<evidence type="ECO:0000305" key="3"/>
<evidence type="ECO:0000312" key="4">
    <source>
        <dbReference type="EMBL" id="ADL08607.1"/>
    </source>
</evidence>
<proteinExistence type="evidence at protein level"/>
<sequence>MLKKSKVKEIQEKVYEALKKANIAITPEEKENIEVADFGLGDLENTGLQLLVYVNTDRYCAKELVLFPGQTCPEHRHPPVNGKPGKQETFRCRYGKVYLYVEGEKTENPHCRPPKGSEQYYTVWHEIELNPGEQYTIEPNTLHWFQAGEEGAIVSEFSSHSDDESDIFTDPRIKRIPEIED</sequence>
<comment type="function">
    <text evidence="2">Sugar isomerase that catalyzes the reversible isomerization of D-lyxose to D-xylulose, and D-mannose to D-fructose (Ref.2). Shows optimum activity using D-lyxose as substrate, but can also effectively catalyze the isomerization between D-fructose and D-mannose (Ref.2).</text>
</comment>
<comment type="catalytic activity">
    <reaction evidence="2">
        <text>D-lyxose = D-xylulose</text>
        <dbReference type="Rhea" id="RHEA:14201"/>
        <dbReference type="ChEBI" id="CHEBI:16789"/>
        <dbReference type="ChEBI" id="CHEBI:17140"/>
        <dbReference type="EC" id="5.3.1.15"/>
    </reaction>
</comment>
<comment type="catalytic activity">
    <reaction evidence="2">
        <text>D-mannose = D-fructose</text>
        <dbReference type="Rhea" id="RHEA:22604"/>
        <dbReference type="ChEBI" id="CHEBI:4208"/>
        <dbReference type="ChEBI" id="CHEBI:37721"/>
        <dbReference type="EC" id="5.3.1.7"/>
    </reaction>
</comment>
<comment type="cofactor">
    <cofactor evidence="2">
        <name>Mn(2+)</name>
        <dbReference type="ChEBI" id="CHEBI:29035"/>
    </cofactor>
    <text evidence="2">Can also use Ni(2+), Co(2+) or Fe(2+), with lower efficiency.</text>
</comment>
<comment type="biophysicochemical properties">
    <kinetics>
        <KM evidence="2">15.5 mM for D-lyxose</KM>
        <KM evidence="2">32.8 mM for D-mannose</KM>
        <KM evidence="2">27.3 mM for D-fructose</KM>
        <text evidence="2">kcat is 3108 min(-1) with D-lyxose as substrate. kcat is 5686 min(-1) with D-mannose as substrate. kcat is 1030 min(-1) with D-fructose as substrate.</text>
    </kinetics>
    <phDependence>
        <text evidence="2">Optimum pH is 6.5. Retains more than 50% of maximal activity from pH 5.0 to 8.0.</text>
    </phDependence>
    <temperatureDependence>
        <text evidence="2">Optimum temperature is 65 degrees Celsius. Highly thermostable at 80 degrees Celsius.</text>
    </temperatureDependence>
</comment>
<comment type="subunit">
    <text evidence="2">Homodimer.</text>
</comment>
<comment type="similarity">
    <text evidence="3">Belongs to the D-lyxose ketol-isomerase family.</text>
</comment>
<feature type="chain" id="PRO_0000455825" description="D-lyxose/D-mannose isomerase">
    <location>
        <begin position="1"/>
        <end position="181"/>
    </location>
</feature>
<feature type="binding site" evidence="1">
    <location>
        <position position="75"/>
    </location>
    <ligand>
        <name>Mn(2+)</name>
        <dbReference type="ChEBI" id="CHEBI:29035"/>
    </ligand>
</feature>
<feature type="binding site" evidence="1">
    <location>
        <position position="77"/>
    </location>
    <ligand>
        <name>Mn(2+)</name>
        <dbReference type="ChEBI" id="CHEBI:29035"/>
    </ligand>
</feature>
<feature type="binding site" evidence="1">
    <location>
        <position position="88"/>
    </location>
    <ligand>
        <name>Mn(2+)</name>
        <dbReference type="ChEBI" id="CHEBI:29035"/>
    </ligand>
</feature>
<feature type="binding site" evidence="1">
    <location>
        <position position="143"/>
    </location>
    <ligand>
        <name>Mn(2+)</name>
        <dbReference type="ChEBI" id="CHEBI:29035"/>
    </ligand>
</feature>
<gene>
    <name evidence="4" type="ordered locus">Toce_1877</name>
</gene>
<name>DLMIS_THEOJ</name>